<protein>
    <recommendedName>
        <fullName evidence="1">Small ribosomal subunit protein uS13</fullName>
    </recommendedName>
    <alternativeName>
        <fullName evidence="3">30S ribosomal protein S13</fullName>
    </alternativeName>
</protein>
<sequence length="120" mass="13575">MARIAGVDLPKKKRVEYALTYIYGIGLKSSREILEAVGISFDKRVHELSEDEVSSIAKKIQQSYLVEGDLRKKVQMDIKSLMDLGNYRGIRHRKGLPVRGQTTKNNARTRKGKKKTVGSK</sequence>
<name>RS13_HELPY</name>
<accession>P56020</accession>
<evidence type="ECO:0000255" key="1">
    <source>
        <dbReference type="HAMAP-Rule" id="MF_01315"/>
    </source>
</evidence>
<evidence type="ECO:0000256" key="2">
    <source>
        <dbReference type="SAM" id="MobiDB-lite"/>
    </source>
</evidence>
<evidence type="ECO:0000305" key="3"/>
<keyword id="KW-1185">Reference proteome</keyword>
<keyword id="KW-0687">Ribonucleoprotein</keyword>
<keyword id="KW-0689">Ribosomal protein</keyword>
<keyword id="KW-0694">RNA-binding</keyword>
<keyword id="KW-0699">rRNA-binding</keyword>
<keyword id="KW-0820">tRNA-binding</keyword>
<organism>
    <name type="scientific">Helicobacter pylori (strain ATCC 700392 / 26695)</name>
    <name type="common">Campylobacter pylori</name>
    <dbReference type="NCBI Taxonomy" id="85962"/>
    <lineage>
        <taxon>Bacteria</taxon>
        <taxon>Pseudomonadati</taxon>
        <taxon>Campylobacterota</taxon>
        <taxon>Epsilonproteobacteria</taxon>
        <taxon>Campylobacterales</taxon>
        <taxon>Helicobacteraceae</taxon>
        <taxon>Helicobacter</taxon>
    </lineage>
</organism>
<dbReference type="EMBL" id="AE000511">
    <property type="protein sequence ID" value="AAD08339.1"/>
    <property type="molecule type" value="Genomic_DNA"/>
</dbReference>
<dbReference type="PIR" id="H64681">
    <property type="entry name" value="H64681"/>
</dbReference>
<dbReference type="RefSeq" id="NP_208088.1">
    <property type="nucleotide sequence ID" value="NC_000915.1"/>
</dbReference>
<dbReference type="RefSeq" id="WP_000090809.1">
    <property type="nucleotide sequence ID" value="NC_018939.1"/>
</dbReference>
<dbReference type="SMR" id="P56020"/>
<dbReference type="FunCoup" id="P56020">
    <property type="interactions" value="417"/>
</dbReference>
<dbReference type="STRING" id="85962.HP_1296"/>
<dbReference type="PaxDb" id="85962-C694_06695"/>
<dbReference type="EnsemblBacteria" id="AAD08339">
    <property type="protein sequence ID" value="AAD08339"/>
    <property type="gene ID" value="HP_1296"/>
</dbReference>
<dbReference type="GeneID" id="93237573"/>
<dbReference type="KEGG" id="heo:C694_06695"/>
<dbReference type="KEGG" id="hpy:HP_1296"/>
<dbReference type="PATRIC" id="fig|85962.47.peg.1390"/>
<dbReference type="eggNOG" id="COG0099">
    <property type="taxonomic scope" value="Bacteria"/>
</dbReference>
<dbReference type="InParanoid" id="P56020"/>
<dbReference type="OrthoDB" id="9803610at2"/>
<dbReference type="PhylomeDB" id="P56020"/>
<dbReference type="Proteomes" id="UP000000429">
    <property type="component" value="Chromosome"/>
</dbReference>
<dbReference type="GO" id="GO:0005829">
    <property type="term" value="C:cytosol"/>
    <property type="evidence" value="ECO:0000318"/>
    <property type="project" value="GO_Central"/>
</dbReference>
<dbReference type="GO" id="GO:0015935">
    <property type="term" value="C:small ribosomal subunit"/>
    <property type="evidence" value="ECO:0000318"/>
    <property type="project" value="GO_Central"/>
</dbReference>
<dbReference type="GO" id="GO:0019843">
    <property type="term" value="F:rRNA binding"/>
    <property type="evidence" value="ECO:0007669"/>
    <property type="project" value="UniProtKB-UniRule"/>
</dbReference>
<dbReference type="GO" id="GO:0003735">
    <property type="term" value="F:structural constituent of ribosome"/>
    <property type="evidence" value="ECO:0007669"/>
    <property type="project" value="InterPro"/>
</dbReference>
<dbReference type="GO" id="GO:0000049">
    <property type="term" value="F:tRNA binding"/>
    <property type="evidence" value="ECO:0007669"/>
    <property type="project" value="UniProtKB-UniRule"/>
</dbReference>
<dbReference type="GO" id="GO:0006412">
    <property type="term" value="P:translation"/>
    <property type="evidence" value="ECO:0007669"/>
    <property type="project" value="UniProtKB-UniRule"/>
</dbReference>
<dbReference type="FunFam" id="1.10.8.50:FF:000001">
    <property type="entry name" value="30S ribosomal protein S13"/>
    <property type="match status" value="1"/>
</dbReference>
<dbReference type="FunFam" id="4.10.910.10:FF:000001">
    <property type="entry name" value="30S ribosomal protein S13"/>
    <property type="match status" value="1"/>
</dbReference>
<dbReference type="Gene3D" id="1.10.8.50">
    <property type="match status" value="1"/>
</dbReference>
<dbReference type="Gene3D" id="4.10.910.10">
    <property type="entry name" value="30s ribosomal protein s13, domain 2"/>
    <property type="match status" value="1"/>
</dbReference>
<dbReference type="HAMAP" id="MF_01315">
    <property type="entry name" value="Ribosomal_uS13"/>
    <property type="match status" value="1"/>
</dbReference>
<dbReference type="InterPro" id="IPR027437">
    <property type="entry name" value="Rbsml_uS13_C"/>
</dbReference>
<dbReference type="InterPro" id="IPR001892">
    <property type="entry name" value="Ribosomal_uS13"/>
</dbReference>
<dbReference type="InterPro" id="IPR010979">
    <property type="entry name" value="Ribosomal_uS13-like_H2TH"/>
</dbReference>
<dbReference type="InterPro" id="IPR019980">
    <property type="entry name" value="Ribosomal_uS13_bac-type"/>
</dbReference>
<dbReference type="InterPro" id="IPR018269">
    <property type="entry name" value="Ribosomal_uS13_CS"/>
</dbReference>
<dbReference type="NCBIfam" id="TIGR03631">
    <property type="entry name" value="uS13_bact"/>
    <property type="match status" value="1"/>
</dbReference>
<dbReference type="PANTHER" id="PTHR10871">
    <property type="entry name" value="30S RIBOSOMAL PROTEIN S13/40S RIBOSOMAL PROTEIN S18"/>
    <property type="match status" value="1"/>
</dbReference>
<dbReference type="PANTHER" id="PTHR10871:SF1">
    <property type="entry name" value="SMALL RIBOSOMAL SUBUNIT PROTEIN US13M"/>
    <property type="match status" value="1"/>
</dbReference>
<dbReference type="Pfam" id="PF00416">
    <property type="entry name" value="Ribosomal_S13"/>
    <property type="match status" value="1"/>
</dbReference>
<dbReference type="PIRSF" id="PIRSF002134">
    <property type="entry name" value="Ribosomal_S13"/>
    <property type="match status" value="1"/>
</dbReference>
<dbReference type="SUPFAM" id="SSF46946">
    <property type="entry name" value="S13-like H2TH domain"/>
    <property type="match status" value="1"/>
</dbReference>
<dbReference type="PROSITE" id="PS00646">
    <property type="entry name" value="RIBOSOMAL_S13_1"/>
    <property type="match status" value="1"/>
</dbReference>
<dbReference type="PROSITE" id="PS50159">
    <property type="entry name" value="RIBOSOMAL_S13_2"/>
    <property type="match status" value="1"/>
</dbReference>
<feature type="chain" id="PRO_0000132096" description="Small ribosomal subunit protein uS13">
    <location>
        <begin position="1"/>
        <end position="120"/>
    </location>
</feature>
<feature type="region of interest" description="Disordered" evidence="2">
    <location>
        <begin position="93"/>
        <end position="120"/>
    </location>
</feature>
<feature type="compositionally biased region" description="Basic residues" evidence="2">
    <location>
        <begin position="107"/>
        <end position="120"/>
    </location>
</feature>
<reference key="1">
    <citation type="journal article" date="1997" name="Nature">
        <title>The complete genome sequence of the gastric pathogen Helicobacter pylori.</title>
        <authorList>
            <person name="Tomb J.-F."/>
            <person name="White O."/>
            <person name="Kerlavage A.R."/>
            <person name="Clayton R.A."/>
            <person name="Sutton G.G."/>
            <person name="Fleischmann R.D."/>
            <person name="Ketchum K.A."/>
            <person name="Klenk H.-P."/>
            <person name="Gill S.R."/>
            <person name="Dougherty B.A."/>
            <person name="Nelson K.E."/>
            <person name="Quackenbush J."/>
            <person name="Zhou L."/>
            <person name="Kirkness E.F."/>
            <person name="Peterson S.N."/>
            <person name="Loftus B.J."/>
            <person name="Richardson D.L."/>
            <person name="Dodson R.J."/>
            <person name="Khalak H.G."/>
            <person name="Glodek A."/>
            <person name="McKenney K."/>
            <person name="FitzGerald L.M."/>
            <person name="Lee N."/>
            <person name="Adams M.D."/>
            <person name="Hickey E.K."/>
            <person name="Berg D.E."/>
            <person name="Gocayne J.D."/>
            <person name="Utterback T.R."/>
            <person name="Peterson J.D."/>
            <person name="Kelley J.M."/>
            <person name="Cotton M.D."/>
            <person name="Weidman J.F."/>
            <person name="Fujii C."/>
            <person name="Bowman C."/>
            <person name="Watthey L."/>
            <person name="Wallin E."/>
            <person name="Hayes W.S."/>
            <person name="Borodovsky M."/>
            <person name="Karp P.D."/>
            <person name="Smith H.O."/>
            <person name="Fraser C.M."/>
            <person name="Venter J.C."/>
        </authorList>
    </citation>
    <scope>NUCLEOTIDE SEQUENCE [LARGE SCALE GENOMIC DNA]</scope>
    <source>
        <strain>ATCC 700392 / 26695</strain>
    </source>
</reference>
<proteinExistence type="inferred from homology"/>
<gene>
    <name evidence="1" type="primary">rpsM</name>
    <name type="ordered locus">HP_1296</name>
</gene>
<comment type="function">
    <text evidence="1">Located at the top of the head of the 30S subunit, it contacts several helices of the 16S rRNA. In the 70S ribosome it contacts the 23S rRNA (bridge B1a) and protein L5 of the 50S subunit (bridge B1b), connecting the 2 subunits; these bridges are implicated in subunit movement. Contacts the tRNAs in the A and P-sites.</text>
</comment>
<comment type="subunit">
    <text evidence="1">Part of the 30S ribosomal subunit. Forms a loose heterodimer with protein S19. Forms two bridges to the 50S subunit in the 70S ribosome.</text>
</comment>
<comment type="similarity">
    <text evidence="1">Belongs to the universal ribosomal protein uS13 family.</text>
</comment>